<accession>B9JVN3</accession>
<gene>
    <name evidence="1" type="primary">rpsG</name>
    <name type="ordered locus">Avi_1834</name>
</gene>
<keyword id="KW-1185">Reference proteome</keyword>
<keyword id="KW-0687">Ribonucleoprotein</keyword>
<keyword id="KW-0689">Ribosomal protein</keyword>
<keyword id="KW-0694">RNA-binding</keyword>
<keyword id="KW-0699">rRNA-binding</keyword>
<keyword id="KW-0820">tRNA-binding</keyword>
<dbReference type="EMBL" id="CP000633">
    <property type="protein sequence ID" value="ACM36313.1"/>
    <property type="molecule type" value="Genomic_DNA"/>
</dbReference>
<dbReference type="RefSeq" id="WP_015915736.1">
    <property type="nucleotide sequence ID" value="NC_011989.1"/>
</dbReference>
<dbReference type="SMR" id="B9JVN3"/>
<dbReference type="STRING" id="311402.Avi_1834"/>
<dbReference type="GeneID" id="60682399"/>
<dbReference type="KEGG" id="avi:Avi_1834"/>
<dbReference type="eggNOG" id="COG0049">
    <property type="taxonomic scope" value="Bacteria"/>
</dbReference>
<dbReference type="HOGENOM" id="CLU_072226_1_1_5"/>
<dbReference type="Proteomes" id="UP000001596">
    <property type="component" value="Chromosome 1"/>
</dbReference>
<dbReference type="GO" id="GO:0015935">
    <property type="term" value="C:small ribosomal subunit"/>
    <property type="evidence" value="ECO:0007669"/>
    <property type="project" value="InterPro"/>
</dbReference>
<dbReference type="GO" id="GO:0019843">
    <property type="term" value="F:rRNA binding"/>
    <property type="evidence" value="ECO:0007669"/>
    <property type="project" value="UniProtKB-UniRule"/>
</dbReference>
<dbReference type="GO" id="GO:0003735">
    <property type="term" value="F:structural constituent of ribosome"/>
    <property type="evidence" value="ECO:0007669"/>
    <property type="project" value="InterPro"/>
</dbReference>
<dbReference type="GO" id="GO:0000049">
    <property type="term" value="F:tRNA binding"/>
    <property type="evidence" value="ECO:0007669"/>
    <property type="project" value="UniProtKB-UniRule"/>
</dbReference>
<dbReference type="GO" id="GO:0006412">
    <property type="term" value="P:translation"/>
    <property type="evidence" value="ECO:0007669"/>
    <property type="project" value="UniProtKB-UniRule"/>
</dbReference>
<dbReference type="CDD" id="cd14869">
    <property type="entry name" value="uS7_Bacteria"/>
    <property type="match status" value="1"/>
</dbReference>
<dbReference type="FunFam" id="1.10.455.10:FF:000001">
    <property type="entry name" value="30S ribosomal protein S7"/>
    <property type="match status" value="1"/>
</dbReference>
<dbReference type="Gene3D" id="1.10.455.10">
    <property type="entry name" value="Ribosomal protein S7 domain"/>
    <property type="match status" value="1"/>
</dbReference>
<dbReference type="HAMAP" id="MF_00480_B">
    <property type="entry name" value="Ribosomal_uS7_B"/>
    <property type="match status" value="1"/>
</dbReference>
<dbReference type="InterPro" id="IPR000235">
    <property type="entry name" value="Ribosomal_uS7"/>
</dbReference>
<dbReference type="InterPro" id="IPR005717">
    <property type="entry name" value="Ribosomal_uS7_bac/org-type"/>
</dbReference>
<dbReference type="InterPro" id="IPR020606">
    <property type="entry name" value="Ribosomal_uS7_CS"/>
</dbReference>
<dbReference type="InterPro" id="IPR023798">
    <property type="entry name" value="Ribosomal_uS7_dom"/>
</dbReference>
<dbReference type="InterPro" id="IPR036823">
    <property type="entry name" value="Ribosomal_uS7_dom_sf"/>
</dbReference>
<dbReference type="NCBIfam" id="TIGR01029">
    <property type="entry name" value="rpsG_bact"/>
    <property type="match status" value="1"/>
</dbReference>
<dbReference type="PANTHER" id="PTHR11205">
    <property type="entry name" value="RIBOSOMAL PROTEIN S7"/>
    <property type="match status" value="1"/>
</dbReference>
<dbReference type="Pfam" id="PF00177">
    <property type="entry name" value="Ribosomal_S7"/>
    <property type="match status" value="1"/>
</dbReference>
<dbReference type="PIRSF" id="PIRSF002122">
    <property type="entry name" value="RPS7p_RPS7a_RPS5e_RPS7o"/>
    <property type="match status" value="1"/>
</dbReference>
<dbReference type="SUPFAM" id="SSF47973">
    <property type="entry name" value="Ribosomal protein S7"/>
    <property type="match status" value="1"/>
</dbReference>
<dbReference type="PROSITE" id="PS00052">
    <property type="entry name" value="RIBOSOMAL_S7"/>
    <property type="match status" value="1"/>
</dbReference>
<evidence type="ECO:0000255" key="1">
    <source>
        <dbReference type="HAMAP-Rule" id="MF_00480"/>
    </source>
</evidence>
<evidence type="ECO:0000305" key="2"/>
<protein>
    <recommendedName>
        <fullName evidence="1">Small ribosomal subunit protein uS7</fullName>
    </recommendedName>
    <alternativeName>
        <fullName evidence="2">30S ribosomal protein S7</fullName>
    </alternativeName>
</protein>
<comment type="function">
    <text evidence="1">One of the primary rRNA binding proteins, it binds directly to 16S rRNA where it nucleates assembly of the head domain of the 30S subunit. Is located at the subunit interface close to the decoding center, probably blocks exit of the E-site tRNA.</text>
</comment>
<comment type="subunit">
    <text evidence="1">Part of the 30S ribosomal subunit. Contacts proteins S9 and S11.</text>
</comment>
<comment type="similarity">
    <text evidence="1">Belongs to the universal ribosomal protein uS7 family.</text>
</comment>
<reference key="1">
    <citation type="journal article" date="2009" name="J. Bacteriol.">
        <title>Genome sequences of three Agrobacterium biovars help elucidate the evolution of multichromosome genomes in bacteria.</title>
        <authorList>
            <person name="Slater S.C."/>
            <person name="Goldman B.S."/>
            <person name="Goodner B."/>
            <person name="Setubal J.C."/>
            <person name="Farrand S.K."/>
            <person name="Nester E.W."/>
            <person name="Burr T.J."/>
            <person name="Banta L."/>
            <person name="Dickerman A.W."/>
            <person name="Paulsen I."/>
            <person name="Otten L."/>
            <person name="Suen G."/>
            <person name="Welch R."/>
            <person name="Almeida N.F."/>
            <person name="Arnold F."/>
            <person name="Burton O.T."/>
            <person name="Du Z."/>
            <person name="Ewing A."/>
            <person name="Godsy E."/>
            <person name="Heisel S."/>
            <person name="Houmiel K.L."/>
            <person name="Jhaveri J."/>
            <person name="Lu J."/>
            <person name="Miller N.M."/>
            <person name="Norton S."/>
            <person name="Chen Q."/>
            <person name="Phoolcharoen W."/>
            <person name="Ohlin V."/>
            <person name="Ondrusek D."/>
            <person name="Pride N."/>
            <person name="Stricklin S.L."/>
            <person name="Sun J."/>
            <person name="Wheeler C."/>
            <person name="Wilson L."/>
            <person name="Zhu H."/>
            <person name="Wood D.W."/>
        </authorList>
    </citation>
    <scope>NUCLEOTIDE SEQUENCE [LARGE SCALE GENOMIC DNA]</scope>
    <source>
        <strain>ATCC BAA-846 / DSM 112012 / S4</strain>
    </source>
</reference>
<organism>
    <name type="scientific">Allorhizobium ampelinum (strain ATCC BAA-846 / DSM 112012 / S4)</name>
    <name type="common">Agrobacterium vitis (strain S4)</name>
    <dbReference type="NCBI Taxonomy" id="311402"/>
    <lineage>
        <taxon>Bacteria</taxon>
        <taxon>Pseudomonadati</taxon>
        <taxon>Pseudomonadota</taxon>
        <taxon>Alphaproteobacteria</taxon>
        <taxon>Hyphomicrobiales</taxon>
        <taxon>Rhizobiaceae</taxon>
        <taxon>Rhizobium/Agrobacterium group</taxon>
        <taxon>Allorhizobium</taxon>
        <taxon>Allorhizobium ampelinum</taxon>
    </lineage>
</organism>
<name>RS7_ALLAM</name>
<proteinExistence type="inferred from homology"/>
<sequence>MSRRHKAEKREINPDPKFGDLVVTKFMNAIMLHGKKSVAESIVYGAFDVVEAKSKAEPIAIFHQALENVAPHVEVRSRRVGGATYQVPVDVRPERRQALAIRWLIIAARKRNETTMVDRLSGELLDASNNRGSAVKKREDTHKMADANRAFSHYRW</sequence>
<feature type="chain" id="PRO_1000135572" description="Small ribosomal subunit protein uS7">
    <location>
        <begin position="1"/>
        <end position="156"/>
    </location>
</feature>